<sequence length="176" mass="19922">MKFVSDLLSVILFFATYTVTKNMIAAAAVALVAGVVQAAFLYWKHKRLDTMQWVGLVLIVVFGGATIVLGDSRFIMWKPTVLFWCGALFLLGSHLAGKNGLKASIGREIQLPDAVWGKLTYMWVGFLIFMGIANWFVFTRFEAQWVNYKMFGSTALMLFFFIIQGIYLSTYLKKED</sequence>
<name>YCIB_NEIG2</name>
<keyword id="KW-0997">Cell inner membrane</keyword>
<keyword id="KW-1003">Cell membrane</keyword>
<keyword id="KW-0472">Membrane</keyword>
<keyword id="KW-0812">Transmembrane</keyword>
<keyword id="KW-1133">Transmembrane helix</keyword>
<feature type="chain" id="PRO_1000098887" description="Inner membrane-spanning protein YciB">
    <location>
        <begin position="1"/>
        <end position="176"/>
    </location>
</feature>
<feature type="transmembrane region" description="Helical" evidence="1">
    <location>
        <begin position="23"/>
        <end position="43"/>
    </location>
</feature>
<feature type="transmembrane region" description="Helical" evidence="1">
    <location>
        <begin position="50"/>
        <end position="70"/>
    </location>
</feature>
<feature type="transmembrane region" description="Helical" evidence="1">
    <location>
        <begin position="74"/>
        <end position="94"/>
    </location>
</feature>
<feature type="transmembrane region" description="Helical" evidence="1">
    <location>
        <begin position="119"/>
        <end position="139"/>
    </location>
</feature>
<feature type="transmembrane region" description="Helical" evidence="1">
    <location>
        <begin position="150"/>
        <end position="170"/>
    </location>
</feature>
<accession>B4RNM0</accession>
<protein>
    <recommendedName>
        <fullName evidence="1">Inner membrane-spanning protein YciB</fullName>
    </recommendedName>
</protein>
<gene>
    <name evidence="1" type="primary">yciB</name>
    <name type="ordered locus">NGK_2044</name>
</gene>
<reference key="1">
    <citation type="journal article" date="2008" name="J. Bacteriol.">
        <title>Complete genome sequence of Neisseria gonorrhoeae NCCP11945.</title>
        <authorList>
            <person name="Chung G.T."/>
            <person name="Yoo J.S."/>
            <person name="Oh H.B."/>
            <person name="Lee Y.S."/>
            <person name="Cha S.H."/>
            <person name="Kim S.J."/>
            <person name="Yoo C.K."/>
        </authorList>
    </citation>
    <scope>NUCLEOTIDE SEQUENCE [LARGE SCALE GENOMIC DNA]</scope>
    <source>
        <strain>NCCP11945</strain>
    </source>
</reference>
<evidence type="ECO:0000255" key="1">
    <source>
        <dbReference type="HAMAP-Rule" id="MF_00189"/>
    </source>
</evidence>
<proteinExistence type="inferred from homology"/>
<organism>
    <name type="scientific">Neisseria gonorrhoeae (strain NCCP11945)</name>
    <dbReference type="NCBI Taxonomy" id="521006"/>
    <lineage>
        <taxon>Bacteria</taxon>
        <taxon>Pseudomonadati</taxon>
        <taxon>Pseudomonadota</taxon>
        <taxon>Betaproteobacteria</taxon>
        <taxon>Neisseriales</taxon>
        <taxon>Neisseriaceae</taxon>
        <taxon>Neisseria</taxon>
    </lineage>
</organism>
<dbReference type="EMBL" id="CP001050">
    <property type="protein sequence ID" value="ACF30653.1"/>
    <property type="molecule type" value="Genomic_DNA"/>
</dbReference>
<dbReference type="RefSeq" id="WP_010359130.1">
    <property type="nucleotide sequence ID" value="NC_011035.1"/>
</dbReference>
<dbReference type="KEGG" id="ngk:NGK_2044"/>
<dbReference type="HOGENOM" id="CLU_089554_2_0_4"/>
<dbReference type="Proteomes" id="UP000002564">
    <property type="component" value="Chromosome"/>
</dbReference>
<dbReference type="GO" id="GO:0005886">
    <property type="term" value="C:plasma membrane"/>
    <property type="evidence" value="ECO:0007669"/>
    <property type="project" value="UniProtKB-SubCell"/>
</dbReference>
<dbReference type="HAMAP" id="MF_00189">
    <property type="entry name" value="YciB"/>
    <property type="match status" value="1"/>
</dbReference>
<dbReference type="InterPro" id="IPR006008">
    <property type="entry name" value="YciB"/>
</dbReference>
<dbReference type="NCBIfam" id="TIGR00997">
    <property type="entry name" value="ispZ"/>
    <property type="match status" value="1"/>
</dbReference>
<dbReference type="NCBIfam" id="NF001325">
    <property type="entry name" value="PRK00259.1-3"/>
    <property type="match status" value="1"/>
</dbReference>
<dbReference type="PANTHER" id="PTHR36917:SF1">
    <property type="entry name" value="INNER MEMBRANE-SPANNING PROTEIN YCIB"/>
    <property type="match status" value="1"/>
</dbReference>
<dbReference type="PANTHER" id="PTHR36917">
    <property type="entry name" value="INTRACELLULAR SEPTATION PROTEIN A-RELATED"/>
    <property type="match status" value="1"/>
</dbReference>
<dbReference type="Pfam" id="PF04279">
    <property type="entry name" value="IspA"/>
    <property type="match status" value="1"/>
</dbReference>
<comment type="function">
    <text evidence="1">Plays a role in cell envelope biogenesis, maintenance of cell envelope integrity and membrane homeostasis.</text>
</comment>
<comment type="subcellular location">
    <subcellularLocation>
        <location evidence="1">Cell inner membrane</location>
        <topology evidence="1">Multi-pass membrane protein</topology>
    </subcellularLocation>
</comment>
<comment type="similarity">
    <text evidence="1">Belongs to the YciB family.</text>
</comment>